<proteinExistence type="inferred from homology"/>
<dbReference type="EMBL" id="AAFI02000049">
    <property type="protein sequence ID" value="EAL65912.2"/>
    <property type="molecule type" value="Genomic_DNA"/>
</dbReference>
<dbReference type="RefSeq" id="XP_639265.2">
    <property type="nucleotide sequence ID" value="XM_634173.2"/>
</dbReference>
<dbReference type="SMR" id="Q54RT6"/>
<dbReference type="GlyGen" id="Q54RT6">
    <property type="glycosylation" value="1 site"/>
</dbReference>
<dbReference type="PaxDb" id="44689-DDB0302645"/>
<dbReference type="EnsemblProtists" id="EAL65912">
    <property type="protein sequence ID" value="EAL65912"/>
    <property type="gene ID" value="DDB_G0282937"/>
</dbReference>
<dbReference type="GeneID" id="8623834"/>
<dbReference type="KEGG" id="ddi:DDB_G0282937"/>
<dbReference type="dictyBase" id="DDB_G0282937"/>
<dbReference type="VEuPathDB" id="AmoebaDB:DDB_G0282937"/>
<dbReference type="eggNOG" id="ENOG502RIN7">
    <property type="taxonomic scope" value="Eukaryota"/>
</dbReference>
<dbReference type="HOGENOM" id="CLU_2268887_0_0_1"/>
<dbReference type="InParanoid" id="Q54RT6"/>
<dbReference type="PRO" id="PR:Q54RT6"/>
<dbReference type="Proteomes" id="UP000002195">
    <property type="component" value="Chromosome 4"/>
</dbReference>
<dbReference type="GO" id="GO:0005737">
    <property type="term" value="C:cytoplasm"/>
    <property type="evidence" value="ECO:0000318"/>
    <property type="project" value="GO_Central"/>
</dbReference>
<dbReference type="GO" id="GO:0005576">
    <property type="term" value="C:extracellular region"/>
    <property type="evidence" value="ECO:0007669"/>
    <property type="project" value="UniProtKB-SubCell"/>
</dbReference>
<dbReference type="InterPro" id="IPR013726">
    <property type="entry name" value="Mitofissin"/>
</dbReference>
<dbReference type="PANTHER" id="PTHR28075">
    <property type="entry name" value="CHROMOSOME 16, WHOLE GENOME SHOTGUN SEQUENCE"/>
    <property type="match status" value="1"/>
</dbReference>
<dbReference type="PANTHER" id="PTHR28075:SF1">
    <property type="entry name" value="DUF1748-DOMAIN-CONTAINING PROTEIN"/>
    <property type="match status" value="1"/>
</dbReference>
<dbReference type="Pfam" id="PF08520">
    <property type="entry name" value="Mitofissin"/>
    <property type="match status" value="1"/>
</dbReference>
<evidence type="ECO:0000255" key="1"/>
<evidence type="ECO:0000256" key="2">
    <source>
        <dbReference type="SAM" id="MobiDB-lite"/>
    </source>
</evidence>
<evidence type="ECO:0000305" key="3"/>
<organism>
    <name type="scientific">Dictyostelium discoideum</name>
    <name type="common">Social amoeba</name>
    <dbReference type="NCBI Taxonomy" id="44689"/>
    <lineage>
        <taxon>Eukaryota</taxon>
        <taxon>Amoebozoa</taxon>
        <taxon>Evosea</taxon>
        <taxon>Eumycetozoa</taxon>
        <taxon>Dictyostelia</taxon>
        <taxon>Dictyosteliales</taxon>
        <taxon>Dictyosteliaceae</taxon>
        <taxon>Dictyostelium</taxon>
    </lineage>
</organism>
<gene>
    <name type="ORF">DDB_G0282937</name>
</gene>
<protein>
    <recommendedName>
        <fullName>Putative uncharacterized protein DDB_G0282937</fullName>
    </recommendedName>
</protein>
<comment type="subcellular location">
    <subcellularLocation>
        <location evidence="3">Secreted</location>
    </subcellularLocation>
</comment>
<feature type="signal peptide" evidence="1">
    <location>
        <begin position="1"/>
        <end position="13"/>
    </location>
</feature>
<feature type="chain" id="PRO_0000351245" description="Putative uncharacterized protein DDB_G0282937">
    <location>
        <begin position="14"/>
        <end position="103"/>
    </location>
</feature>
<feature type="region of interest" description="Disordered" evidence="2">
    <location>
        <begin position="73"/>
        <end position="103"/>
    </location>
</feature>
<feature type="glycosylation site" description="N-linked (GlcNAc...) asparagine" evidence="1">
    <location>
        <position position="67"/>
    </location>
</feature>
<keyword id="KW-0325">Glycoprotein</keyword>
<keyword id="KW-1185">Reference proteome</keyword>
<keyword id="KW-0964">Secreted</keyword>
<keyword id="KW-0732">Signal</keyword>
<accession>Q54RT6</accession>
<reference key="1">
    <citation type="journal article" date="2005" name="Nature">
        <title>The genome of the social amoeba Dictyostelium discoideum.</title>
        <authorList>
            <person name="Eichinger L."/>
            <person name="Pachebat J.A."/>
            <person name="Gloeckner G."/>
            <person name="Rajandream M.A."/>
            <person name="Sucgang R."/>
            <person name="Berriman M."/>
            <person name="Song J."/>
            <person name="Olsen R."/>
            <person name="Szafranski K."/>
            <person name="Xu Q."/>
            <person name="Tunggal B."/>
            <person name="Kummerfeld S."/>
            <person name="Madera M."/>
            <person name="Konfortov B.A."/>
            <person name="Rivero F."/>
            <person name="Bankier A.T."/>
            <person name="Lehmann R."/>
            <person name="Hamlin N."/>
            <person name="Davies R."/>
            <person name="Gaudet P."/>
            <person name="Fey P."/>
            <person name="Pilcher K."/>
            <person name="Chen G."/>
            <person name="Saunders D."/>
            <person name="Sodergren E.J."/>
            <person name="Davis P."/>
            <person name="Kerhornou A."/>
            <person name="Nie X."/>
            <person name="Hall N."/>
            <person name="Anjard C."/>
            <person name="Hemphill L."/>
            <person name="Bason N."/>
            <person name="Farbrother P."/>
            <person name="Desany B."/>
            <person name="Just E."/>
            <person name="Morio T."/>
            <person name="Rost R."/>
            <person name="Churcher C.M."/>
            <person name="Cooper J."/>
            <person name="Haydock S."/>
            <person name="van Driessche N."/>
            <person name="Cronin A."/>
            <person name="Goodhead I."/>
            <person name="Muzny D.M."/>
            <person name="Mourier T."/>
            <person name="Pain A."/>
            <person name="Lu M."/>
            <person name="Harper D."/>
            <person name="Lindsay R."/>
            <person name="Hauser H."/>
            <person name="James K.D."/>
            <person name="Quiles M."/>
            <person name="Madan Babu M."/>
            <person name="Saito T."/>
            <person name="Buchrieser C."/>
            <person name="Wardroper A."/>
            <person name="Felder M."/>
            <person name="Thangavelu M."/>
            <person name="Johnson D."/>
            <person name="Knights A."/>
            <person name="Loulseged H."/>
            <person name="Mungall K.L."/>
            <person name="Oliver K."/>
            <person name="Price C."/>
            <person name="Quail M.A."/>
            <person name="Urushihara H."/>
            <person name="Hernandez J."/>
            <person name="Rabbinowitsch E."/>
            <person name="Steffen D."/>
            <person name="Sanders M."/>
            <person name="Ma J."/>
            <person name="Kohara Y."/>
            <person name="Sharp S."/>
            <person name="Simmonds M.N."/>
            <person name="Spiegler S."/>
            <person name="Tivey A."/>
            <person name="Sugano S."/>
            <person name="White B."/>
            <person name="Walker D."/>
            <person name="Woodward J.R."/>
            <person name="Winckler T."/>
            <person name="Tanaka Y."/>
            <person name="Shaulsky G."/>
            <person name="Schleicher M."/>
            <person name="Weinstock G.M."/>
            <person name="Rosenthal A."/>
            <person name="Cox E.C."/>
            <person name="Chisholm R.L."/>
            <person name="Gibbs R.A."/>
            <person name="Loomis W.F."/>
            <person name="Platzer M."/>
            <person name="Kay R.R."/>
            <person name="Williams J.G."/>
            <person name="Dear P.H."/>
            <person name="Noegel A.A."/>
            <person name="Barrell B.G."/>
            <person name="Kuspa A."/>
        </authorList>
    </citation>
    <scope>NUCLEOTIDE SEQUENCE [LARGE SCALE GENOMIC DNA]</scope>
    <source>
        <strain>AX4</strain>
    </source>
</reference>
<sequence>MLLSSIVSFVADAAVVSTSIACLRHFTGFSLLRPANKIKNDKIRTGLLVYLNSGELIFNKGLEMVRNSSIKSLSSDSNRNIIDNSNNNQHPSSSSTSTSWKKF</sequence>
<name>Y5270_DICDI</name>